<protein>
    <recommendedName>
        <fullName evidence="1">Thiazole synthase</fullName>
        <ecNumber evidence="1">2.8.1.10</ecNumber>
    </recommendedName>
</protein>
<organism>
    <name type="scientific">Shigella dysenteriae serotype 1 (strain Sd197)</name>
    <dbReference type="NCBI Taxonomy" id="300267"/>
    <lineage>
        <taxon>Bacteria</taxon>
        <taxon>Pseudomonadati</taxon>
        <taxon>Pseudomonadota</taxon>
        <taxon>Gammaproteobacteria</taxon>
        <taxon>Enterobacterales</taxon>
        <taxon>Enterobacteriaceae</taxon>
        <taxon>Shigella</taxon>
    </lineage>
</organism>
<reference key="1">
    <citation type="journal article" date="2005" name="Nucleic Acids Res.">
        <title>Genome dynamics and diversity of Shigella species, the etiologic agents of bacillary dysentery.</title>
        <authorList>
            <person name="Yang F."/>
            <person name="Yang J."/>
            <person name="Zhang X."/>
            <person name="Chen L."/>
            <person name="Jiang Y."/>
            <person name="Yan Y."/>
            <person name="Tang X."/>
            <person name="Wang J."/>
            <person name="Xiong Z."/>
            <person name="Dong J."/>
            <person name="Xue Y."/>
            <person name="Zhu Y."/>
            <person name="Xu X."/>
            <person name="Sun L."/>
            <person name="Chen S."/>
            <person name="Nie H."/>
            <person name="Peng J."/>
            <person name="Xu J."/>
            <person name="Wang Y."/>
            <person name="Yuan Z."/>
            <person name="Wen Y."/>
            <person name="Yao Z."/>
            <person name="Shen Y."/>
            <person name="Qiang B."/>
            <person name="Hou Y."/>
            <person name="Yu J."/>
            <person name="Jin Q."/>
        </authorList>
    </citation>
    <scope>NUCLEOTIDE SEQUENCE [LARGE SCALE GENOMIC DNA]</scope>
    <source>
        <strain>Sd197</strain>
    </source>
</reference>
<accession>Q32AG3</accession>
<sequence length="256" mass="26906">MLRIADKTFDSHLVTGTGKFASSQLMVEAIRASGSQLVTLAMKRVDLRQHNDAILEPLIAAGVTLLPNTSGAKTAEEAIFAAHLAREALGTNWLKLEIHPDARWLLPDPIETLKAAETLVQQGFVVLPYCGADPVLCKRLEEVGCAAVMPLGAPIGSNQGLETRAMLEIIIQQATVPVVVDAGIGVPSHAAQALEMGTDAVLVNTAIAVADDPVNMAKAFRLAVEAGLLARQSGPGSRSYFAHATSPLTGFLEASV</sequence>
<evidence type="ECO:0000255" key="1">
    <source>
        <dbReference type="HAMAP-Rule" id="MF_00443"/>
    </source>
</evidence>
<evidence type="ECO:0000305" key="2"/>
<gene>
    <name evidence="1" type="primary">thiG</name>
    <name type="ordered locus">SDY_3736</name>
</gene>
<comment type="function">
    <text evidence="1">Catalyzes the rearrangement of 1-deoxy-D-xylulose 5-phosphate (DXP) to produce the thiazole phosphate moiety of thiamine. Sulfur is provided by the thiocarboxylate moiety of the carrier protein ThiS. In vitro, sulfur can be provided by H(2)S.</text>
</comment>
<comment type="catalytic activity">
    <reaction evidence="1">
        <text>[ThiS sulfur-carrier protein]-C-terminal-Gly-aminoethanethioate + 2-iminoacetate + 1-deoxy-D-xylulose 5-phosphate = [ThiS sulfur-carrier protein]-C-terminal Gly-Gly + 2-[(2R,5Z)-2-carboxy-4-methylthiazol-5(2H)-ylidene]ethyl phosphate + 2 H2O + H(+)</text>
        <dbReference type="Rhea" id="RHEA:26297"/>
        <dbReference type="Rhea" id="RHEA-COMP:12909"/>
        <dbReference type="Rhea" id="RHEA-COMP:19908"/>
        <dbReference type="ChEBI" id="CHEBI:15377"/>
        <dbReference type="ChEBI" id="CHEBI:15378"/>
        <dbReference type="ChEBI" id="CHEBI:57792"/>
        <dbReference type="ChEBI" id="CHEBI:62899"/>
        <dbReference type="ChEBI" id="CHEBI:77846"/>
        <dbReference type="ChEBI" id="CHEBI:90778"/>
        <dbReference type="ChEBI" id="CHEBI:232372"/>
        <dbReference type="EC" id="2.8.1.10"/>
    </reaction>
</comment>
<comment type="pathway">
    <text evidence="1">Cofactor biosynthesis; thiamine diphosphate biosynthesis.</text>
</comment>
<comment type="subunit">
    <text evidence="1">Homotetramer. Forms heterodimers with either ThiH or ThiS.</text>
</comment>
<comment type="subcellular location">
    <subcellularLocation>
        <location evidence="1">Cytoplasm</location>
    </subcellularLocation>
</comment>
<comment type="similarity">
    <text evidence="1">Belongs to the ThiG family.</text>
</comment>
<comment type="sequence caution" evidence="2">
    <conflict type="erroneous initiation">
        <sequence resource="EMBL-CDS" id="ABB63692"/>
    </conflict>
</comment>
<proteinExistence type="inferred from homology"/>
<dbReference type="EC" id="2.8.1.10" evidence="1"/>
<dbReference type="EMBL" id="CP000034">
    <property type="protein sequence ID" value="ABB63692.1"/>
    <property type="status" value="ALT_INIT"/>
    <property type="molecule type" value="Genomic_DNA"/>
</dbReference>
<dbReference type="RefSeq" id="WP_000944122.1">
    <property type="nucleotide sequence ID" value="NC_007606.1"/>
</dbReference>
<dbReference type="RefSeq" id="YP_405183.2">
    <property type="nucleotide sequence ID" value="NC_007606.1"/>
</dbReference>
<dbReference type="SMR" id="Q32AG3"/>
<dbReference type="STRING" id="300267.SDY_3736"/>
<dbReference type="EnsemblBacteria" id="ABB63692">
    <property type="protein sequence ID" value="ABB63692"/>
    <property type="gene ID" value="SDY_3736"/>
</dbReference>
<dbReference type="KEGG" id="sdy:SDY_3736"/>
<dbReference type="PATRIC" id="fig|300267.13.peg.4428"/>
<dbReference type="HOGENOM" id="CLU_062233_1_0_6"/>
<dbReference type="UniPathway" id="UPA00060"/>
<dbReference type="Proteomes" id="UP000002716">
    <property type="component" value="Chromosome"/>
</dbReference>
<dbReference type="GO" id="GO:0005737">
    <property type="term" value="C:cytoplasm"/>
    <property type="evidence" value="ECO:0007669"/>
    <property type="project" value="UniProtKB-SubCell"/>
</dbReference>
<dbReference type="GO" id="GO:1990107">
    <property type="term" value="F:thiazole synthase activity"/>
    <property type="evidence" value="ECO:0007669"/>
    <property type="project" value="UniProtKB-EC"/>
</dbReference>
<dbReference type="GO" id="GO:0009229">
    <property type="term" value="P:thiamine diphosphate biosynthetic process"/>
    <property type="evidence" value="ECO:0007669"/>
    <property type="project" value="UniProtKB-UniRule"/>
</dbReference>
<dbReference type="CDD" id="cd04728">
    <property type="entry name" value="ThiG"/>
    <property type="match status" value="1"/>
</dbReference>
<dbReference type="FunFam" id="3.20.20.70:FF:000049">
    <property type="entry name" value="Thiazole synthase"/>
    <property type="match status" value="1"/>
</dbReference>
<dbReference type="Gene3D" id="3.20.20.70">
    <property type="entry name" value="Aldolase class I"/>
    <property type="match status" value="1"/>
</dbReference>
<dbReference type="HAMAP" id="MF_00443">
    <property type="entry name" value="ThiG"/>
    <property type="match status" value="1"/>
</dbReference>
<dbReference type="InterPro" id="IPR013785">
    <property type="entry name" value="Aldolase_TIM"/>
</dbReference>
<dbReference type="InterPro" id="IPR033983">
    <property type="entry name" value="Thiazole_synthase_ThiG"/>
</dbReference>
<dbReference type="InterPro" id="IPR008867">
    <property type="entry name" value="ThiG"/>
</dbReference>
<dbReference type="PANTHER" id="PTHR34266">
    <property type="entry name" value="THIAZOLE SYNTHASE"/>
    <property type="match status" value="1"/>
</dbReference>
<dbReference type="PANTHER" id="PTHR34266:SF2">
    <property type="entry name" value="THIAZOLE SYNTHASE"/>
    <property type="match status" value="1"/>
</dbReference>
<dbReference type="Pfam" id="PF05690">
    <property type="entry name" value="ThiG"/>
    <property type="match status" value="1"/>
</dbReference>
<dbReference type="SUPFAM" id="SSF110399">
    <property type="entry name" value="ThiG-like"/>
    <property type="match status" value="1"/>
</dbReference>
<keyword id="KW-0963">Cytoplasm</keyword>
<keyword id="KW-1185">Reference proteome</keyword>
<keyword id="KW-0704">Schiff base</keyword>
<keyword id="KW-0784">Thiamine biosynthesis</keyword>
<keyword id="KW-0808">Transferase</keyword>
<feature type="chain" id="PRO_0000236365" description="Thiazole synthase">
    <location>
        <begin position="1"/>
        <end position="256"/>
    </location>
</feature>
<feature type="active site" description="Schiff-base intermediate with DXP" evidence="1">
    <location>
        <position position="95"/>
    </location>
</feature>
<feature type="binding site" evidence="1">
    <location>
        <position position="156"/>
    </location>
    <ligand>
        <name>1-deoxy-D-xylulose 5-phosphate</name>
        <dbReference type="ChEBI" id="CHEBI:57792"/>
    </ligand>
</feature>
<feature type="binding site" evidence="1">
    <location>
        <begin position="182"/>
        <end position="183"/>
    </location>
    <ligand>
        <name>1-deoxy-D-xylulose 5-phosphate</name>
        <dbReference type="ChEBI" id="CHEBI:57792"/>
    </ligand>
</feature>
<feature type="binding site" evidence="1">
    <location>
        <begin position="204"/>
        <end position="205"/>
    </location>
    <ligand>
        <name>1-deoxy-D-xylulose 5-phosphate</name>
        <dbReference type="ChEBI" id="CHEBI:57792"/>
    </ligand>
</feature>
<name>THIG_SHIDS</name>